<proteinExistence type="inferred from homology"/>
<keyword id="KW-0067">ATP-binding</keyword>
<keyword id="KW-0436">Ligase</keyword>
<keyword id="KW-0547">Nucleotide-binding</keyword>
<keyword id="KW-0648">Protein biosynthesis</keyword>
<organism>
    <name type="scientific">Campylobacter jejuni subsp. jejuni serotype O:6 (strain 81116 / NCTC 11828)</name>
    <dbReference type="NCBI Taxonomy" id="407148"/>
    <lineage>
        <taxon>Bacteria</taxon>
        <taxon>Pseudomonadati</taxon>
        <taxon>Campylobacterota</taxon>
        <taxon>Epsilonproteobacteria</taxon>
        <taxon>Campylobacterales</taxon>
        <taxon>Campylobacteraceae</taxon>
        <taxon>Campylobacter</taxon>
    </lineage>
</organism>
<evidence type="ECO:0000255" key="1">
    <source>
        <dbReference type="HAMAP-Rule" id="MF_00121"/>
    </source>
</evidence>
<dbReference type="EC" id="6.3.5.-" evidence="1"/>
<dbReference type="EMBL" id="CP000814">
    <property type="protein sequence ID" value="ABV52740.1"/>
    <property type="molecule type" value="Genomic_DNA"/>
</dbReference>
<dbReference type="RefSeq" id="WP_002868575.1">
    <property type="nucleotide sequence ID" value="NC_009839.1"/>
</dbReference>
<dbReference type="SMR" id="A8FMQ3"/>
<dbReference type="KEGG" id="cju:C8J_1141"/>
<dbReference type="HOGENOM" id="CLU_019240_0_0_7"/>
<dbReference type="GO" id="GO:0050566">
    <property type="term" value="F:asparaginyl-tRNA synthase (glutamine-hydrolyzing) activity"/>
    <property type="evidence" value="ECO:0007669"/>
    <property type="project" value="RHEA"/>
</dbReference>
<dbReference type="GO" id="GO:0005524">
    <property type="term" value="F:ATP binding"/>
    <property type="evidence" value="ECO:0007669"/>
    <property type="project" value="UniProtKB-KW"/>
</dbReference>
<dbReference type="GO" id="GO:0050567">
    <property type="term" value="F:glutaminyl-tRNA synthase (glutamine-hydrolyzing) activity"/>
    <property type="evidence" value="ECO:0007669"/>
    <property type="project" value="UniProtKB-UniRule"/>
</dbReference>
<dbReference type="GO" id="GO:0070681">
    <property type="term" value="P:glutaminyl-tRNAGln biosynthesis via transamidation"/>
    <property type="evidence" value="ECO:0007669"/>
    <property type="project" value="TreeGrafter"/>
</dbReference>
<dbReference type="GO" id="GO:0006412">
    <property type="term" value="P:translation"/>
    <property type="evidence" value="ECO:0007669"/>
    <property type="project" value="UniProtKB-UniRule"/>
</dbReference>
<dbReference type="FunFam" id="1.10.10.410:FF:000001">
    <property type="entry name" value="Aspartyl/glutamyl-tRNA(Asn/Gln) amidotransferase subunit B"/>
    <property type="match status" value="1"/>
</dbReference>
<dbReference type="Gene3D" id="1.10.10.410">
    <property type="match status" value="1"/>
</dbReference>
<dbReference type="Gene3D" id="1.10.150.380">
    <property type="entry name" value="GatB domain, N-terminal subdomain"/>
    <property type="match status" value="1"/>
</dbReference>
<dbReference type="HAMAP" id="MF_00121">
    <property type="entry name" value="GatB"/>
    <property type="match status" value="1"/>
</dbReference>
<dbReference type="InterPro" id="IPR017959">
    <property type="entry name" value="Asn/Gln-tRNA_amidoTrfase_suB/E"/>
</dbReference>
<dbReference type="InterPro" id="IPR006075">
    <property type="entry name" value="Asn/Gln-tRNA_Trfase_suB/E_cat"/>
</dbReference>
<dbReference type="InterPro" id="IPR018027">
    <property type="entry name" value="Asn/Gln_amidotransferase"/>
</dbReference>
<dbReference type="InterPro" id="IPR003789">
    <property type="entry name" value="Asn/Gln_tRNA_amidoTrase-B-like"/>
</dbReference>
<dbReference type="InterPro" id="IPR004413">
    <property type="entry name" value="GatB"/>
</dbReference>
<dbReference type="InterPro" id="IPR042114">
    <property type="entry name" value="GatB_C_1"/>
</dbReference>
<dbReference type="InterPro" id="IPR023168">
    <property type="entry name" value="GatB_Yqey_C_2"/>
</dbReference>
<dbReference type="InterPro" id="IPR017958">
    <property type="entry name" value="Gln-tRNA_amidoTrfase_suB_CS"/>
</dbReference>
<dbReference type="InterPro" id="IPR014746">
    <property type="entry name" value="Gln_synth/guanido_kin_cat_dom"/>
</dbReference>
<dbReference type="NCBIfam" id="TIGR00133">
    <property type="entry name" value="gatB"/>
    <property type="match status" value="1"/>
</dbReference>
<dbReference type="NCBIfam" id="NF004012">
    <property type="entry name" value="PRK05477.1-2"/>
    <property type="match status" value="1"/>
</dbReference>
<dbReference type="NCBIfam" id="NF004014">
    <property type="entry name" value="PRK05477.1-4"/>
    <property type="match status" value="1"/>
</dbReference>
<dbReference type="PANTHER" id="PTHR11659">
    <property type="entry name" value="GLUTAMYL-TRNA GLN AMIDOTRANSFERASE SUBUNIT B MITOCHONDRIAL AND PROKARYOTIC PET112-RELATED"/>
    <property type="match status" value="1"/>
</dbReference>
<dbReference type="PANTHER" id="PTHR11659:SF0">
    <property type="entry name" value="GLUTAMYL-TRNA(GLN) AMIDOTRANSFERASE SUBUNIT B, MITOCHONDRIAL"/>
    <property type="match status" value="1"/>
</dbReference>
<dbReference type="Pfam" id="PF02934">
    <property type="entry name" value="GatB_N"/>
    <property type="match status" value="1"/>
</dbReference>
<dbReference type="Pfam" id="PF02637">
    <property type="entry name" value="GatB_Yqey"/>
    <property type="match status" value="1"/>
</dbReference>
<dbReference type="SMART" id="SM00845">
    <property type="entry name" value="GatB_Yqey"/>
    <property type="match status" value="1"/>
</dbReference>
<dbReference type="SUPFAM" id="SSF89095">
    <property type="entry name" value="GatB/YqeY motif"/>
    <property type="match status" value="1"/>
</dbReference>
<dbReference type="SUPFAM" id="SSF55931">
    <property type="entry name" value="Glutamine synthetase/guanido kinase"/>
    <property type="match status" value="1"/>
</dbReference>
<dbReference type="PROSITE" id="PS01234">
    <property type="entry name" value="GATB"/>
    <property type="match status" value="1"/>
</dbReference>
<sequence>MFEVVIGLEVHTQLNTKTKIFCSCATSFGEAPNTNVCPTCLALPGALPVLNEEAVKKAIAFGKAVNATINKKSVFNRKNYFYPDLPKAYQISQFDIPIVEKGELFINVKGENKRIGITRAHLEEDAGKNIHENNFSKVDLNRAGTPLLEIVSEPELRSSDEAVAYLKKLHSIIRFLDISDANMQEGSFRCDANVSIRPKGDTKLYTRVEIKNLNSFRFIQKAIEYEVKRQSEAWEDGTYEQEVVQETRLFDTTNLVTRSMRGKEEAAEYRYFPDPDLLPVLLKDEFLDIKIPELPDEKKARFIDELGIKESDAEVLISSLEMSRFFESLISQNLNSKLCVNWLNTELMGLLKGELTIENSPVDAQKLGVLIKRIEDGTISAKAAKDVLAFVFENTSVEIDEAIEKLGLKQVSDDSAIEAVIEQILNANADKVAEYKSGKDKLFGFFVGQTMKEGKGAFNPAKVNEILKTKLG</sequence>
<accession>A8FMQ3</accession>
<feature type="chain" id="PRO_1000071372" description="Aspartyl/glutamyl-tRNA(Asn/Gln) amidotransferase subunit B">
    <location>
        <begin position="1"/>
        <end position="472"/>
    </location>
</feature>
<gene>
    <name evidence="1" type="primary">gatB</name>
    <name type="ordered locus">C8J_1141</name>
</gene>
<name>GATB_CAMJ8</name>
<reference key="1">
    <citation type="journal article" date="2007" name="J. Bacteriol.">
        <title>The complete genome sequence of Campylobacter jejuni strain 81116 (NCTC11828).</title>
        <authorList>
            <person name="Pearson B.M."/>
            <person name="Gaskin D.J.H."/>
            <person name="Segers R.P.A.M."/>
            <person name="Wells J.M."/>
            <person name="Nuijten P.J.M."/>
            <person name="van Vliet A.H.M."/>
        </authorList>
    </citation>
    <scope>NUCLEOTIDE SEQUENCE [LARGE SCALE GENOMIC DNA]</scope>
    <source>
        <strain>81116 / NCTC 11828</strain>
    </source>
</reference>
<comment type="function">
    <text evidence="1">Allows the formation of correctly charged Asn-tRNA(Asn) or Gln-tRNA(Gln) through the transamidation of misacylated Asp-tRNA(Asn) or Glu-tRNA(Gln) in organisms which lack either or both of asparaginyl-tRNA or glutaminyl-tRNA synthetases. The reaction takes place in the presence of glutamine and ATP through an activated phospho-Asp-tRNA(Asn) or phospho-Glu-tRNA(Gln).</text>
</comment>
<comment type="catalytic activity">
    <reaction evidence="1">
        <text>L-glutamyl-tRNA(Gln) + L-glutamine + ATP + H2O = L-glutaminyl-tRNA(Gln) + L-glutamate + ADP + phosphate + H(+)</text>
        <dbReference type="Rhea" id="RHEA:17521"/>
        <dbReference type="Rhea" id="RHEA-COMP:9681"/>
        <dbReference type="Rhea" id="RHEA-COMP:9684"/>
        <dbReference type="ChEBI" id="CHEBI:15377"/>
        <dbReference type="ChEBI" id="CHEBI:15378"/>
        <dbReference type="ChEBI" id="CHEBI:29985"/>
        <dbReference type="ChEBI" id="CHEBI:30616"/>
        <dbReference type="ChEBI" id="CHEBI:43474"/>
        <dbReference type="ChEBI" id="CHEBI:58359"/>
        <dbReference type="ChEBI" id="CHEBI:78520"/>
        <dbReference type="ChEBI" id="CHEBI:78521"/>
        <dbReference type="ChEBI" id="CHEBI:456216"/>
    </reaction>
</comment>
<comment type="catalytic activity">
    <reaction evidence="1">
        <text>L-aspartyl-tRNA(Asn) + L-glutamine + ATP + H2O = L-asparaginyl-tRNA(Asn) + L-glutamate + ADP + phosphate + 2 H(+)</text>
        <dbReference type="Rhea" id="RHEA:14513"/>
        <dbReference type="Rhea" id="RHEA-COMP:9674"/>
        <dbReference type="Rhea" id="RHEA-COMP:9677"/>
        <dbReference type="ChEBI" id="CHEBI:15377"/>
        <dbReference type="ChEBI" id="CHEBI:15378"/>
        <dbReference type="ChEBI" id="CHEBI:29985"/>
        <dbReference type="ChEBI" id="CHEBI:30616"/>
        <dbReference type="ChEBI" id="CHEBI:43474"/>
        <dbReference type="ChEBI" id="CHEBI:58359"/>
        <dbReference type="ChEBI" id="CHEBI:78515"/>
        <dbReference type="ChEBI" id="CHEBI:78516"/>
        <dbReference type="ChEBI" id="CHEBI:456216"/>
    </reaction>
</comment>
<comment type="subunit">
    <text evidence="1">Heterotrimer of A, B and C subunits.</text>
</comment>
<comment type="similarity">
    <text evidence="1">Belongs to the GatB/GatE family. GatB subfamily.</text>
</comment>
<protein>
    <recommendedName>
        <fullName evidence="1">Aspartyl/glutamyl-tRNA(Asn/Gln) amidotransferase subunit B</fullName>
        <shortName evidence="1">Asp/Glu-ADT subunit B</shortName>
        <ecNumber evidence="1">6.3.5.-</ecNumber>
    </recommendedName>
</protein>